<organism>
    <name type="scientific">Conus pennaceus</name>
    <name type="common">Feathered cone</name>
    <name type="synonym">Conus episcopus</name>
    <dbReference type="NCBI Taxonomy" id="37335"/>
    <lineage>
        <taxon>Eukaryota</taxon>
        <taxon>Metazoa</taxon>
        <taxon>Spiralia</taxon>
        <taxon>Lophotrochozoa</taxon>
        <taxon>Mollusca</taxon>
        <taxon>Gastropoda</taxon>
        <taxon>Caenogastropoda</taxon>
        <taxon>Neogastropoda</taxon>
        <taxon>Conoidea</taxon>
        <taxon>Conidae</taxon>
        <taxon>Conus</taxon>
        <taxon>Darioconus</taxon>
    </lineage>
</organism>
<sequence>MGMRMMFTVFLLVVLATTVVSFTSDRASDGGNAAASDLIALTIKGCCSRPPCALSNPDYCG</sequence>
<name>CAL12_CONPE</name>
<protein>
    <recommendedName>
        <fullName>Alpha-conotoxin-like PnMGMR-02</fullName>
    </recommendedName>
</protein>
<reference key="1">
    <citation type="journal article" date="2001" name="Mol. Biol. Evol.">
        <title>Mechanisms for evolving hypervariability: the case of conopeptides.</title>
        <authorList>
            <person name="Conticello S.G."/>
            <person name="Gilad Y."/>
            <person name="Avidan N."/>
            <person name="Ben-Asher E."/>
            <person name="Levy Z."/>
            <person name="Fainzilber M."/>
        </authorList>
    </citation>
    <scope>NUCLEOTIDE SEQUENCE [MRNA]</scope>
    <source>
        <tissue>Venom duct</tissue>
    </source>
</reference>
<proteinExistence type="inferred from homology"/>
<evidence type="ECO:0000250" key="1"/>
<evidence type="ECO:0000250" key="2">
    <source>
        <dbReference type="UniProtKB" id="P56636"/>
    </source>
</evidence>
<evidence type="ECO:0000255" key="3"/>
<evidence type="ECO:0000305" key="4"/>
<evidence type="ECO:0000305" key="5">
    <source>
    </source>
</evidence>
<accession>Q9BP56</accession>
<comment type="function">
    <text evidence="1">Alpha-conotoxins act on postsynaptic membranes, they bind to the nicotinic acetylcholine receptors (nAChR) and thus inhibit them. This toxin blocks mammalian nAChRs (alpha-7 &gt; alpha-3/beta-2) (By similarity).</text>
</comment>
<comment type="subcellular location">
    <subcellularLocation>
        <location evidence="5">Secreted</location>
    </subcellularLocation>
</comment>
<comment type="tissue specificity">
    <text evidence="5">Expressed by the venom duct.</text>
</comment>
<comment type="domain">
    <text evidence="4">The cysteine framework is I (CC-C-C). Alpha4/7 pattern.</text>
</comment>
<comment type="similarity">
    <text evidence="4">Belongs to the conotoxin A superfamily.</text>
</comment>
<feature type="signal peptide" evidence="3">
    <location>
        <begin position="1"/>
        <end position="21"/>
    </location>
</feature>
<feature type="propeptide" id="PRO_0000404874" evidence="1">
    <location>
        <begin position="22"/>
        <end position="44"/>
    </location>
</feature>
<feature type="peptide" id="PRO_0000404875" description="Alpha-conotoxin-like PnMGMR-02">
    <location>
        <begin position="45"/>
        <end position="60"/>
    </location>
</feature>
<feature type="region of interest" description="Ser-Xaa-Pro motif, crucial for potent interaction with nAChR" evidence="2">
    <location>
        <begin position="48"/>
        <end position="50"/>
    </location>
</feature>
<feature type="site" description="Direct interaction with nAChR alpha-7 subunit" evidence="1">
    <location>
        <position position="54"/>
    </location>
</feature>
<feature type="modified residue" description="Cysteine amide" evidence="1">
    <location>
        <position position="60"/>
    </location>
</feature>
<feature type="disulfide bond" evidence="2">
    <location>
        <begin position="46"/>
        <end position="52"/>
    </location>
</feature>
<feature type="disulfide bond" evidence="2">
    <location>
        <begin position="47"/>
        <end position="60"/>
    </location>
</feature>
<keyword id="KW-0008">Acetylcholine receptor inhibiting toxin</keyword>
<keyword id="KW-0027">Amidation</keyword>
<keyword id="KW-1015">Disulfide bond</keyword>
<keyword id="KW-0872">Ion channel impairing toxin</keyword>
<keyword id="KW-0528">Neurotoxin</keyword>
<keyword id="KW-0629">Postsynaptic neurotoxin</keyword>
<keyword id="KW-0964">Secreted</keyword>
<keyword id="KW-0732">Signal</keyword>
<keyword id="KW-0765">Sulfation</keyword>
<keyword id="KW-0800">Toxin</keyword>
<dbReference type="EMBL" id="AF215089">
    <property type="protein sequence ID" value="AAG60510.1"/>
    <property type="molecule type" value="mRNA"/>
</dbReference>
<dbReference type="ConoServer" id="37">
    <property type="toxin name" value="PnMGMR-02 precursor"/>
</dbReference>
<dbReference type="GO" id="GO:0005576">
    <property type="term" value="C:extracellular region"/>
    <property type="evidence" value="ECO:0007669"/>
    <property type="project" value="UniProtKB-SubCell"/>
</dbReference>
<dbReference type="GO" id="GO:0035792">
    <property type="term" value="C:host cell postsynaptic membrane"/>
    <property type="evidence" value="ECO:0007669"/>
    <property type="project" value="UniProtKB-KW"/>
</dbReference>
<dbReference type="GO" id="GO:0030550">
    <property type="term" value="F:acetylcholine receptor inhibitor activity"/>
    <property type="evidence" value="ECO:0007669"/>
    <property type="project" value="UniProtKB-KW"/>
</dbReference>
<dbReference type="GO" id="GO:0099106">
    <property type="term" value="F:ion channel regulator activity"/>
    <property type="evidence" value="ECO:0007669"/>
    <property type="project" value="UniProtKB-KW"/>
</dbReference>
<dbReference type="GO" id="GO:0090729">
    <property type="term" value="F:toxin activity"/>
    <property type="evidence" value="ECO:0007669"/>
    <property type="project" value="UniProtKB-KW"/>
</dbReference>
<dbReference type="InterPro" id="IPR009958">
    <property type="entry name" value="Conotoxin_a-typ"/>
</dbReference>
<dbReference type="InterPro" id="IPR018072">
    <property type="entry name" value="Conotoxin_a-typ_CS"/>
</dbReference>
<dbReference type="Pfam" id="PF07365">
    <property type="entry name" value="Toxin_8"/>
    <property type="match status" value="1"/>
</dbReference>
<dbReference type="PROSITE" id="PS60014">
    <property type="entry name" value="ALPHA_CONOTOXIN"/>
    <property type="match status" value="1"/>
</dbReference>